<accession>Q0AB67</accession>
<protein>
    <recommendedName>
        <fullName evidence="1">Aspartate 1-decarboxylase</fullName>
        <ecNumber evidence="1">4.1.1.11</ecNumber>
    </recommendedName>
    <alternativeName>
        <fullName evidence="1">Aspartate alpha-decarboxylase</fullName>
    </alternativeName>
    <component>
        <recommendedName>
            <fullName evidence="1">Aspartate 1-decarboxylase beta chain</fullName>
        </recommendedName>
    </component>
    <component>
        <recommendedName>
            <fullName evidence="1">Aspartate 1-decarboxylase alpha chain</fullName>
        </recommendedName>
    </component>
</protein>
<reference key="1">
    <citation type="submission" date="2006-08" db="EMBL/GenBank/DDBJ databases">
        <title>Complete sequence of Alkalilimnicola ehrilichei MLHE-1.</title>
        <authorList>
            <person name="Copeland A."/>
            <person name="Lucas S."/>
            <person name="Lapidus A."/>
            <person name="Barry K."/>
            <person name="Detter J.C."/>
            <person name="Glavina del Rio T."/>
            <person name="Hammon N."/>
            <person name="Israni S."/>
            <person name="Dalin E."/>
            <person name="Tice H."/>
            <person name="Pitluck S."/>
            <person name="Sims D."/>
            <person name="Brettin T."/>
            <person name="Bruce D."/>
            <person name="Han C."/>
            <person name="Tapia R."/>
            <person name="Gilna P."/>
            <person name="Schmutz J."/>
            <person name="Larimer F."/>
            <person name="Land M."/>
            <person name="Hauser L."/>
            <person name="Kyrpides N."/>
            <person name="Mikhailova N."/>
            <person name="Oremland R.S."/>
            <person name="Hoeft S.E."/>
            <person name="Switzer-Blum J."/>
            <person name="Kulp T."/>
            <person name="King G."/>
            <person name="Tabita R."/>
            <person name="Witte B."/>
            <person name="Santini J.M."/>
            <person name="Basu P."/>
            <person name="Hollibaugh J.T."/>
            <person name="Xie G."/>
            <person name="Stolz J.F."/>
            <person name="Richardson P."/>
        </authorList>
    </citation>
    <scope>NUCLEOTIDE SEQUENCE [LARGE SCALE GENOMIC DNA]</scope>
    <source>
        <strain>ATCC BAA-1101 / DSM 17681 / MLHE-1</strain>
    </source>
</reference>
<comment type="function">
    <text evidence="1">Catalyzes the pyruvoyl-dependent decarboxylation of aspartate to produce beta-alanine.</text>
</comment>
<comment type="catalytic activity">
    <reaction evidence="1">
        <text>L-aspartate + H(+) = beta-alanine + CO2</text>
        <dbReference type="Rhea" id="RHEA:19497"/>
        <dbReference type="ChEBI" id="CHEBI:15378"/>
        <dbReference type="ChEBI" id="CHEBI:16526"/>
        <dbReference type="ChEBI" id="CHEBI:29991"/>
        <dbReference type="ChEBI" id="CHEBI:57966"/>
        <dbReference type="EC" id="4.1.1.11"/>
    </reaction>
</comment>
<comment type="cofactor">
    <cofactor evidence="1">
        <name>pyruvate</name>
        <dbReference type="ChEBI" id="CHEBI:15361"/>
    </cofactor>
    <text evidence="1">Binds 1 pyruvoyl group covalently per subunit.</text>
</comment>
<comment type="pathway">
    <text evidence="1">Cofactor biosynthesis; (R)-pantothenate biosynthesis; beta-alanine from L-aspartate: step 1/1.</text>
</comment>
<comment type="subunit">
    <text evidence="1">Heterooctamer of four alpha and four beta subunits.</text>
</comment>
<comment type="subcellular location">
    <subcellularLocation>
        <location evidence="1">Cytoplasm</location>
    </subcellularLocation>
</comment>
<comment type="PTM">
    <text evidence="1">Is synthesized initially as an inactive proenzyme, which is activated by self-cleavage at a specific serine bond to produce a beta-subunit with a hydroxyl group at its C-terminus and an alpha-subunit with a pyruvoyl group at its N-terminus.</text>
</comment>
<comment type="similarity">
    <text evidence="1">Belongs to the PanD family.</text>
</comment>
<proteinExistence type="inferred from homology"/>
<keyword id="KW-0068">Autocatalytic cleavage</keyword>
<keyword id="KW-0963">Cytoplasm</keyword>
<keyword id="KW-0210">Decarboxylase</keyword>
<keyword id="KW-0456">Lyase</keyword>
<keyword id="KW-0566">Pantothenate biosynthesis</keyword>
<keyword id="KW-0670">Pyruvate</keyword>
<keyword id="KW-1185">Reference proteome</keyword>
<keyword id="KW-0704">Schiff base</keyword>
<keyword id="KW-0865">Zymogen</keyword>
<dbReference type="EC" id="4.1.1.11" evidence="1"/>
<dbReference type="EMBL" id="CP000453">
    <property type="protein sequence ID" value="ABI55920.1"/>
    <property type="molecule type" value="Genomic_DNA"/>
</dbReference>
<dbReference type="RefSeq" id="WP_011628315.1">
    <property type="nucleotide sequence ID" value="NC_008340.1"/>
</dbReference>
<dbReference type="SMR" id="Q0AB67"/>
<dbReference type="KEGG" id="aeh:Mlg_0566"/>
<dbReference type="eggNOG" id="COG0853">
    <property type="taxonomic scope" value="Bacteria"/>
</dbReference>
<dbReference type="HOGENOM" id="CLU_115305_2_1_6"/>
<dbReference type="OrthoDB" id="9803983at2"/>
<dbReference type="UniPathway" id="UPA00028">
    <property type="reaction ID" value="UER00002"/>
</dbReference>
<dbReference type="Proteomes" id="UP000001962">
    <property type="component" value="Chromosome"/>
</dbReference>
<dbReference type="GO" id="GO:0005829">
    <property type="term" value="C:cytosol"/>
    <property type="evidence" value="ECO:0007669"/>
    <property type="project" value="TreeGrafter"/>
</dbReference>
<dbReference type="GO" id="GO:0004068">
    <property type="term" value="F:aspartate 1-decarboxylase activity"/>
    <property type="evidence" value="ECO:0007669"/>
    <property type="project" value="UniProtKB-UniRule"/>
</dbReference>
<dbReference type="GO" id="GO:0006523">
    <property type="term" value="P:alanine biosynthetic process"/>
    <property type="evidence" value="ECO:0007669"/>
    <property type="project" value="InterPro"/>
</dbReference>
<dbReference type="GO" id="GO:0015940">
    <property type="term" value="P:pantothenate biosynthetic process"/>
    <property type="evidence" value="ECO:0007669"/>
    <property type="project" value="UniProtKB-UniRule"/>
</dbReference>
<dbReference type="CDD" id="cd06919">
    <property type="entry name" value="Asp_decarbox"/>
    <property type="match status" value="1"/>
</dbReference>
<dbReference type="Gene3D" id="2.40.40.20">
    <property type="match status" value="1"/>
</dbReference>
<dbReference type="HAMAP" id="MF_00446">
    <property type="entry name" value="PanD"/>
    <property type="match status" value="1"/>
</dbReference>
<dbReference type="InterPro" id="IPR009010">
    <property type="entry name" value="Asp_de-COase-like_dom_sf"/>
</dbReference>
<dbReference type="InterPro" id="IPR003190">
    <property type="entry name" value="Asp_decarbox"/>
</dbReference>
<dbReference type="NCBIfam" id="TIGR00223">
    <property type="entry name" value="panD"/>
    <property type="match status" value="1"/>
</dbReference>
<dbReference type="PANTHER" id="PTHR21012">
    <property type="entry name" value="ASPARTATE 1-DECARBOXYLASE"/>
    <property type="match status" value="1"/>
</dbReference>
<dbReference type="PANTHER" id="PTHR21012:SF0">
    <property type="entry name" value="ASPARTATE 1-DECARBOXYLASE"/>
    <property type="match status" value="1"/>
</dbReference>
<dbReference type="Pfam" id="PF02261">
    <property type="entry name" value="Asp_decarbox"/>
    <property type="match status" value="1"/>
</dbReference>
<dbReference type="PIRSF" id="PIRSF006246">
    <property type="entry name" value="Asp_decarbox"/>
    <property type="match status" value="1"/>
</dbReference>
<dbReference type="SUPFAM" id="SSF50692">
    <property type="entry name" value="ADC-like"/>
    <property type="match status" value="1"/>
</dbReference>
<feature type="chain" id="PRO_0000306923" description="Aspartate 1-decarboxylase beta chain" evidence="1">
    <location>
        <begin position="1"/>
        <end position="24"/>
    </location>
</feature>
<feature type="chain" id="PRO_0000306924" description="Aspartate 1-decarboxylase alpha chain" evidence="1">
    <location>
        <begin position="25"/>
        <end position="126"/>
    </location>
</feature>
<feature type="active site" description="Schiff-base intermediate with substrate; via pyruvic acid" evidence="1">
    <location>
        <position position="25"/>
    </location>
</feature>
<feature type="active site" description="Proton donor" evidence="1">
    <location>
        <position position="58"/>
    </location>
</feature>
<feature type="binding site" evidence="1">
    <location>
        <position position="57"/>
    </location>
    <ligand>
        <name>substrate</name>
    </ligand>
</feature>
<feature type="binding site" evidence="1">
    <location>
        <begin position="73"/>
        <end position="75"/>
    </location>
    <ligand>
        <name>substrate</name>
    </ligand>
</feature>
<feature type="modified residue" description="Pyruvic acid (Ser)" evidence="1">
    <location>
        <position position="25"/>
    </location>
</feature>
<organism>
    <name type="scientific">Alkalilimnicola ehrlichii (strain ATCC BAA-1101 / DSM 17681 / MLHE-1)</name>
    <dbReference type="NCBI Taxonomy" id="187272"/>
    <lineage>
        <taxon>Bacteria</taxon>
        <taxon>Pseudomonadati</taxon>
        <taxon>Pseudomonadota</taxon>
        <taxon>Gammaproteobacteria</taxon>
        <taxon>Chromatiales</taxon>
        <taxon>Ectothiorhodospiraceae</taxon>
        <taxon>Alkalilimnicola</taxon>
    </lineage>
</organism>
<name>PAND_ALKEH</name>
<evidence type="ECO:0000255" key="1">
    <source>
        <dbReference type="HAMAP-Rule" id="MF_00446"/>
    </source>
</evidence>
<gene>
    <name evidence="1" type="primary">panD</name>
    <name type="ordered locus">Mlg_0566</name>
</gene>
<sequence length="126" mass="13923">MQLNMLKCKLHQACVTDTELDYEGSCAIDANLMDAAGIREFEQIHVYNLANGARFTTYAIRGEAGSRMISMNGAAAHLCSEGDRIIICCYANVDESELDRHEPALVYCDGDNRITHQRNGIPLQVA</sequence>